<accession>Q6G7L4</accession>
<reference key="1">
    <citation type="journal article" date="2004" name="Proc. Natl. Acad. Sci. U.S.A.">
        <title>Complete genomes of two clinical Staphylococcus aureus strains: evidence for the rapid evolution of virulence and drug resistance.</title>
        <authorList>
            <person name="Holden M.T.G."/>
            <person name="Feil E.J."/>
            <person name="Lindsay J.A."/>
            <person name="Peacock S.J."/>
            <person name="Day N.P.J."/>
            <person name="Enright M.C."/>
            <person name="Foster T.J."/>
            <person name="Moore C.E."/>
            <person name="Hurst L."/>
            <person name="Atkin R."/>
            <person name="Barron A."/>
            <person name="Bason N."/>
            <person name="Bentley S.D."/>
            <person name="Chillingworth C."/>
            <person name="Chillingworth T."/>
            <person name="Churcher C."/>
            <person name="Clark L."/>
            <person name="Corton C."/>
            <person name="Cronin A."/>
            <person name="Doggett J."/>
            <person name="Dowd L."/>
            <person name="Feltwell T."/>
            <person name="Hance Z."/>
            <person name="Harris B."/>
            <person name="Hauser H."/>
            <person name="Holroyd S."/>
            <person name="Jagels K."/>
            <person name="James K.D."/>
            <person name="Lennard N."/>
            <person name="Line A."/>
            <person name="Mayes R."/>
            <person name="Moule S."/>
            <person name="Mungall K."/>
            <person name="Ormond D."/>
            <person name="Quail M.A."/>
            <person name="Rabbinowitsch E."/>
            <person name="Rutherford K.M."/>
            <person name="Sanders M."/>
            <person name="Sharp S."/>
            <person name="Simmonds M."/>
            <person name="Stevens K."/>
            <person name="Whitehead S."/>
            <person name="Barrell B.G."/>
            <person name="Spratt B.G."/>
            <person name="Parkhill J."/>
        </authorList>
    </citation>
    <scope>NUCLEOTIDE SEQUENCE [LARGE SCALE GENOMIC DNA]</scope>
    <source>
        <strain>MSSA476</strain>
    </source>
</reference>
<comment type="function">
    <text evidence="1">Is able to cleave peptidoglycan and affects clumping and separation of bacterial cells.</text>
</comment>
<comment type="subcellular location">
    <subcellularLocation>
        <location evidence="1">Secreted</location>
    </subcellularLocation>
</comment>
<comment type="induction">
    <text evidence="1">Positively regulated by sigma B factor.</text>
</comment>
<comment type="similarity">
    <text evidence="4">Belongs to the transglycosylase family. SceD subfamily.</text>
</comment>
<feature type="signal peptide" evidence="2">
    <location>
        <begin position="1"/>
        <end position="27"/>
    </location>
</feature>
<feature type="chain" id="PRO_0000320316" description="Probable transglycosylase SceD">
    <location>
        <begin position="28"/>
        <end position="231"/>
    </location>
</feature>
<feature type="region of interest" description="Disordered" evidence="3">
    <location>
        <begin position="106"/>
        <end position="153"/>
    </location>
</feature>
<feature type="compositionally biased region" description="Polar residues" evidence="3">
    <location>
        <begin position="106"/>
        <end position="116"/>
    </location>
</feature>
<feature type="compositionally biased region" description="Low complexity" evidence="3">
    <location>
        <begin position="119"/>
        <end position="137"/>
    </location>
</feature>
<feature type="compositionally biased region" description="Polar residues" evidence="3">
    <location>
        <begin position="138"/>
        <end position="153"/>
    </location>
</feature>
<sequence>MKKTLLASSLAVGLGIVAGNAGHEAHASEADLNKASLAQMAQSNDQTLNQKPIEAGAYNYTFDYEGFTYHFESDGTHFAWNYHATGTNGADMSAQAPATNNVAPSAVQANQVQSQEVEAPQNAQTQQPQASTSNNSQVTATPTESKSSEGSSVNVNAHLKQIAQRESGGNIHAVNPTSGAAGKYQFLQSTWDSVAPAKYKGVSPANAPESVQDAAAVKLYNTGGAGHWVTA</sequence>
<evidence type="ECO:0000250" key="1"/>
<evidence type="ECO:0000255" key="2"/>
<evidence type="ECO:0000256" key="3">
    <source>
        <dbReference type="SAM" id="MobiDB-lite"/>
    </source>
</evidence>
<evidence type="ECO:0000305" key="4"/>
<name>SCED_STAAS</name>
<dbReference type="EC" id="3.2.-.-"/>
<dbReference type="EMBL" id="BX571857">
    <property type="protein sequence ID" value="CAG43807.1"/>
    <property type="molecule type" value="Genomic_DNA"/>
</dbReference>
<dbReference type="RefSeq" id="WP_000752008.1">
    <property type="nucleotide sequence ID" value="NC_002953.3"/>
</dbReference>
<dbReference type="SMR" id="Q6G7L4"/>
<dbReference type="KEGG" id="sas:SAS1999"/>
<dbReference type="HOGENOM" id="CLU_099865_0_0_9"/>
<dbReference type="GO" id="GO:0005576">
    <property type="term" value="C:extracellular region"/>
    <property type="evidence" value="ECO:0007669"/>
    <property type="project" value="UniProtKB-SubCell"/>
</dbReference>
<dbReference type="GO" id="GO:0016798">
    <property type="term" value="F:hydrolase activity, acting on glycosyl bonds"/>
    <property type="evidence" value="ECO:0007669"/>
    <property type="project" value="UniProtKB-KW"/>
</dbReference>
<dbReference type="CDD" id="cd13925">
    <property type="entry name" value="RPF"/>
    <property type="match status" value="1"/>
</dbReference>
<dbReference type="Gene3D" id="1.10.530.10">
    <property type="match status" value="1"/>
</dbReference>
<dbReference type="InterPro" id="IPR023346">
    <property type="entry name" value="Lysozyme-like_dom_sf"/>
</dbReference>
<dbReference type="InterPro" id="IPR010618">
    <property type="entry name" value="RPF"/>
</dbReference>
<dbReference type="Pfam" id="PF06737">
    <property type="entry name" value="Transglycosylas"/>
    <property type="match status" value="1"/>
</dbReference>
<dbReference type="SUPFAM" id="SSF53955">
    <property type="entry name" value="Lysozyme-like"/>
    <property type="match status" value="1"/>
</dbReference>
<proteinExistence type="inferred from homology"/>
<keyword id="KW-0326">Glycosidase</keyword>
<keyword id="KW-0378">Hydrolase</keyword>
<keyword id="KW-0964">Secreted</keyword>
<keyword id="KW-0732">Signal</keyword>
<organism>
    <name type="scientific">Staphylococcus aureus (strain MSSA476)</name>
    <dbReference type="NCBI Taxonomy" id="282459"/>
    <lineage>
        <taxon>Bacteria</taxon>
        <taxon>Bacillati</taxon>
        <taxon>Bacillota</taxon>
        <taxon>Bacilli</taxon>
        <taxon>Bacillales</taxon>
        <taxon>Staphylococcaceae</taxon>
        <taxon>Staphylococcus</taxon>
    </lineage>
</organism>
<protein>
    <recommendedName>
        <fullName>Probable transglycosylase SceD</fullName>
        <ecNumber>3.2.-.-</ecNumber>
    </recommendedName>
</protein>
<gene>
    <name type="primary">sceD</name>
    <name type="ordered locus">SAS1999</name>
</gene>